<gene>
    <name type="primary">PP2A-2</name>
</gene>
<accession>Q8X178</accession>
<reference key="1">
    <citation type="submission" date="2001-12" db="EMBL/GenBank/DDBJ databases">
        <authorList>
            <person name="Zhang Z."/>
            <person name="Scott P."/>
            <person name="Gurr S.J."/>
        </authorList>
    </citation>
    <scope>NUCLEOTIDE SEQUENCE [GENOMIC DNA]</scope>
</reference>
<feature type="chain" id="PRO_0000058869" description="Serine/threonine-protein phosphatase PP2A-2 catalytic subunit">
    <location>
        <begin position="1"/>
        <end position="328"/>
    </location>
</feature>
<feature type="active site" description="Proton donor" evidence="1">
    <location>
        <position position="137"/>
    </location>
</feature>
<feature type="binding site" evidence="1">
    <location>
        <position position="76"/>
    </location>
    <ligand>
        <name>Mn(2+)</name>
        <dbReference type="ChEBI" id="CHEBI:29035"/>
        <label>1</label>
    </ligand>
</feature>
<feature type="binding site" evidence="1">
    <location>
        <position position="78"/>
    </location>
    <ligand>
        <name>Mn(2+)</name>
        <dbReference type="ChEBI" id="CHEBI:29035"/>
        <label>1</label>
    </ligand>
</feature>
<feature type="binding site" evidence="1">
    <location>
        <position position="104"/>
    </location>
    <ligand>
        <name>Mn(2+)</name>
        <dbReference type="ChEBI" id="CHEBI:29035"/>
        <label>1</label>
    </ligand>
</feature>
<feature type="binding site" evidence="1">
    <location>
        <position position="104"/>
    </location>
    <ligand>
        <name>Mn(2+)</name>
        <dbReference type="ChEBI" id="CHEBI:29035"/>
        <label>2</label>
    </ligand>
</feature>
<feature type="binding site" evidence="1">
    <location>
        <position position="136"/>
    </location>
    <ligand>
        <name>Mn(2+)</name>
        <dbReference type="ChEBI" id="CHEBI:29035"/>
        <label>2</label>
    </ligand>
</feature>
<feature type="binding site" evidence="1">
    <location>
        <position position="186"/>
    </location>
    <ligand>
        <name>Mn(2+)</name>
        <dbReference type="ChEBI" id="CHEBI:29035"/>
        <label>2</label>
    </ligand>
</feature>
<feature type="binding site" evidence="1">
    <location>
        <position position="260"/>
    </location>
    <ligand>
        <name>Mn(2+)</name>
        <dbReference type="ChEBI" id="CHEBI:29035"/>
        <label>2</label>
    </ligand>
</feature>
<feature type="modified residue" description="Leucine methyl ester" evidence="1">
    <location>
        <position position="328"/>
    </location>
</feature>
<keyword id="KW-0378">Hydrolase</keyword>
<keyword id="KW-0464">Manganese</keyword>
<keyword id="KW-0479">Metal-binding</keyword>
<keyword id="KW-0488">Methylation</keyword>
<keyword id="KW-0904">Protein phosphatase</keyword>
<protein>
    <recommendedName>
        <fullName>Serine/threonine-protein phosphatase PP2A-2 catalytic subunit</fullName>
        <ecNumber>3.1.3.16</ecNumber>
    </recommendedName>
</protein>
<proteinExistence type="inferred from homology"/>
<evidence type="ECO:0000250" key="1"/>
<evidence type="ECO:0000305" key="2"/>
<name>PP2A2_BLUHO</name>
<dbReference type="EC" id="3.1.3.16"/>
<dbReference type="EMBL" id="AF462042">
    <property type="protein sequence ID" value="AAL69898.1"/>
    <property type="molecule type" value="Genomic_DNA"/>
</dbReference>
<dbReference type="SMR" id="Q8X178"/>
<dbReference type="EnsemblFungi" id="BLGH_03799-mRNA-1">
    <property type="protein sequence ID" value="BLGH_03799-mRNA-1"/>
    <property type="gene ID" value="BLGH_03799"/>
</dbReference>
<dbReference type="VEuPathDB" id="FungiDB:BLGHR1_10308"/>
<dbReference type="GO" id="GO:0046872">
    <property type="term" value="F:metal ion binding"/>
    <property type="evidence" value="ECO:0007669"/>
    <property type="project" value="UniProtKB-KW"/>
</dbReference>
<dbReference type="GO" id="GO:0004722">
    <property type="term" value="F:protein serine/threonine phosphatase activity"/>
    <property type="evidence" value="ECO:0007669"/>
    <property type="project" value="UniProtKB-EC"/>
</dbReference>
<dbReference type="CDD" id="cd07415">
    <property type="entry name" value="MPP_PP2A_PP4_PP6"/>
    <property type="match status" value="1"/>
</dbReference>
<dbReference type="FunFam" id="3.60.21.10:FF:000003">
    <property type="entry name" value="Serine/threonine-protein phosphatase"/>
    <property type="match status" value="1"/>
</dbReference>
<dbReference type="Gene3D" id="3.60.21.10">
    <property type="match status" value="1"/>
</dbReference>
<dbReference type="InterPro" id="IPR004843">
    <property type="entry name" value="Calcineurin-like_PHP_ApaH"/>
</dbReference>
<dbReference type="InterPro" id="IPR029052">
    <property type="entry name" value="Metallo-depent_PP-like"/>
</dbReference>
<dbReference type="InterPro" id="IPR047129">
    <property type="entry name" value="PPA2-like"/>
</dbReference>
<dbReference type="InterPro" id="IPR006186">
    <property type="entry name" value="Ser/Thr-sp_prot-phosphatase"/>
</dbReference>
<dbReference type="PANTHER" id="PTHR45619">
    <property type="entry name" value="SERINE/THREONINE-PROTEIN PHOSPHATASE PP2A-RELATED"/>
    <property type="match status" value="1"/>
</dbReference>
<dbReference type="Pfam" id="PF00149">
    <property type="entry name" value="Metallophos"/>
    <property type="match status" value="1"/>
</dbReference>
<dbReference type="PRINTS" id="PR00114">
    <property type="entry name" value="STPHPHTASE"/>
</dbReference>
<dbReference type="SMART" id="SM00156">
    <property type="entry name" value="PP2Ac"/>
    <property type="match status" value="1"/>
</dbReference>
<dbReference type="SUPFAM" id="SSF56300">
    <property type="entry name" value="Metallo-dependent phosphatases"/>
    <property type="match status" value="1"/>
</dbReference>
<dbReference type="PROSITE" id="PS00125">
    <property type="entry name" value="SER_THR_PHOSPHATASE"/>
    <property type="match status" value="1"/>
</dbReference>
<organism>
    <name type="scientific">Blumeria hordei</name>
    <name type="common">Barley powdery mildew</name>
    <name type="synonym">Blumeria graminis f. sp. hordei</name>
    <dbReference type="NCBI Taxonomy" id="2867405"/>
    <lineage>
        <taxon>Eukaryota</taxon>
        <taxon>Fungi</taxon>
        <taxon>Dikarya</taxon>
        <taxon>Ascomycota</taxon>
        <taxon>Pezizomycotina</taxon>
        <taxon>Leotiomycetes</taxon>
        <taxon>Erysiphales</taxon>
        <taxon>Erysiphaceae</taxon>
        <taxon>Blumeria</taxon>
    </lineage>
</organism>
<comment type="catalytic activity">
    <reaction>
        <text>O-phospho-L-seryl-[protein] + H2O = L-seryl-[protein] + phosphate</text>
        <dbReference type="Rhea" id="RHEA:20629"/>
        <dbReference type="Rhea" id="RHEA-COMP:9863"/>
        <dbReference type="Rhea" id="RHEA-COMP:11604"/>
        <dbReference type="ChEBI" id="CHEBI:15377"/>
        <dbReference type="ChEBI" id="CHEBI:29999"/>
        <dbReference type="ChEBI" id="CHEBI:43474"/>
        <dbReference type="ChEBI" id="CHEBI:83421"/>
        <dbReference type="EC" id="3.1.3.16"/>
    </reaction>
</comment>
<comment type="catalytic activity">
    <reaction>
        <text>O-phospho-L-threonyl-[protein] + H2O = L-threonyl-[protein] + phosphate</text>
        <dbReference type="Rhea" id="RHEA:47004"/>
        <dbReference type="Rhea" id="RHEA-COMP:11060"/>
        <dbReference type="Rhea" id="RHEA-COMP:11605"/>
        <dbReference type="ChEBI" id="CHEBI:15377"/>
        <dbReference type="ChEBI" id="CHEBI:30013"/>
        <dbReference type="ChEBI" id="CHEBI:43474"/>
        <dbReference type="ChEBI" id="CHEBI:61977"/>
        <dbReference type="EC" id="3.1.3.16"/>
    </reaction>
</comment>
<comment type="cofactor">
    <cofactor evidence="1">
        <name>Mn(2+)</name>
        <dbReference type="ChEBI" id="CHEBI:29035"/>
    </cofactor>
    <text evidence="1">Binds 2 manganese ions per subunit.</text>
</comment>
<comment type="similarity">
    <text evidence="2">Belongs to the PPP phosphatase family. PP-2A subfamily.</text>
</comment>
<sequence length="328" mass="37486">MDTKMEDVGKTPEPIRFQTTTEPASISTLDGWIENLMACKQLPEVDVLRLCEKAREVLHSESNVQPVKCPVTVCGDIHGQFHDLMELFRIGGPNPDTNYLFMGDYVDRGYYSVETVTLLVALKIRYPQRITILRGNHESRQITQVYGFYDECLRKYGNANVWKYFTNLFDFLPLTALIENQIFCLHGGLSPSIDTLDNIKSLDRIQEVPHEGPMCDLLWSDPDDRCGWGISPRGAGYTFGQDISEAFNHNNGLTLVARAHQLVMEGYNWSQDRNVVTIFSAPNYCYRCGNQAAIMEIDEHLKYTFLQFDPCPRAGEPMVTRRTPDYFL</sequence>